<reference key="1">
    <citation type="journal article" date="2005" name="J. Bacteriol.">
        <title>Insights on evolution of virulence and resistance from the complete genome analysis of an early methicillin-resistant Staphylococcus aureus strain and a biofilm-producing methicillin-resistant Staphylococcus epidermidis strain.</title>
        <authorList>
            <person name="Gill S.R."/>
            <person name="Fouts D.E."/>
            <person name="Archer G.L."/>
            <person name="Mongodin E.F."/>
            <person name="DeBoy R.T."/>
            <person name="Ravel J."/>
            <person name="Paulsen I.T."/>
            <person name="Kolonay J.F."/>
            <person name="Brinkac L.M."/>
            <person name="Beanan M.J."/>
            <person name="Dodson R.J."/>
            <person name="Daugherty S.C."/>
            <person name="Madupu R."/>
            <person name="Angiuoli S.V."/>
            <person name="Durkin A.S."/>
            <person name="Haft D.H."/>
            <person name="Vamathevan J.J."/>
            <person name="Khouri H."/>
            <person name="Utterback T.R."/>
            <person name="Lee C."/>
            <person name="Dimitrov G."/>
            <person name="Jiang L."/>
            <person name="Qin H."/>
            <person name="Weidman J."/>
            <person name="Tran K."/>
            <person name="Kang K.H."/>
            <person name="Hance I.R."/>
            <person name="Nelson K.E."/>
            <person name="Fraser C.M."/>
        </authorList>
    </citation>
    <scope>NUCLEOTIDE SEQUENCE [LARGE SCALE GENOMIC DNA]</scope>
    <source>
        <strain>COL</strain>
    </source>
</reference>
<dbReference type="EC" id="2.5.1.78" evidence="1"/>
<dbReference type="EMBL" id="CP000046">
    <property type="protein sequence ID" value="AAW38344.1"/>
    <property type="molecule type" value="Genomic_DNA"/>
</dbReference>
<dbReference type="SMR" id="Q5HF08"/>
<dbReference type="KEGG" id="sac:SACOL1817"/>
<dbReference type="HOGENOM" id="CLU_089358_1_1_9"/>
<dbReference type="UniPathway" id="UPA00275">
    <property type="reaction ID" value="UER00404"/>
</dbReference>
<dbReference type="Proteomes" id="UP000000530">
    <property type="component" value="Chromosome"/>
</dbReference>
<dbReference type="GO" id="GO:0005829">
    <property type="term" value="C:cytosol"/>
    <property type="evidence" value="ECO:0007669"/>
    <property type="project" value="TreeGrafter"/>
</dbReference>
<dbReference type="GO" id="GO:0009349">
    <property type="term" value="C:riboflavin synthase complex"/>
    <property type="evidence" value="ECO:0007669"/>
    <property type="project" value="InterPro"/>
</dbReference>
<dbReference type="GO" id="GO:0000906">
    <property type="term" value="F:6,7-dimethyl-8-ribityllumazine synthase activity"/>
    <property type="evidence" value="ECO:0007669"/>
    <property type="project" value="UniProtKB-UniRule"/>
</dbReference>
<dbReference type="GO" id="GO:0009231">
    <property type="term" value="P:riboflavin biosynthetic process"/>
    <property type="evidence" value="ECO:0007669"/>
    <property type="project" value="UniProtKB-UniRule"/>
</dbReference>
<dbReference type="CDD" id="cd09209">
    <property type="entry name" value="Lumazine_synthase-I"/>
    <property type="match status" value="1"/>
</dbReference>
<dbReference type="FunFam" id="3.40.50.960:FF:000001">
    <property type="entry name" value="6,7-dimethyl-8-ribityllumazine synthase"/>
    <property type="match status" value="1"/>
</dbReference>
<dbReference type="Gene3D" id="3.40.50.960">
    <property type="entry name" value="Lumazine/riboflavin synthase"/>
    <property type="match status" value="1"/>
</dbReference>
<dbReference type="HAMAP" id="MF_00178">
    <property type="entry name" value="Lumazine_synth"/>
    <property type="match status" value="1"/>
</dbReference>
<dbReference type="InterPro" id="IPR034964">
    <property type="entry name" value="LS"/>
</dbReference>
<dbReference type="InterPro" id="IPR002180">
    <property type="entry name" value="LS/RS"/>
</dbReference>
<dbReference type="InterPro" id="IPR036467">
    <property type="entry name" value="LS/RS_sf"/>
</dbReference>
<dbReference type="NCBIfam" id="TIGR00114">
    <property type="entry name" value="lumazine-synth"/>
    <property type="match status" value="1"/>
</dbReference>
<dbReference type="NCBIfam" id="NF000812">
    <property type="entry name" value="PRK00061.1-4"/>
    <property type="match status" value="1"/>
</dbReference>
<dbReference type="PANTHER" id="PTHR21058:SF0">
    <property type="entry name" value="6,7-DIMETHYL-8-RIBITYLLUMAZINE SYNTHASE"/>
    <property type="match status" value="1"/>
</dbReference>
<dbReference type="PANTHER" id="PTHR21058">
    <property type="entry name" value="6,7-DIMETHYL-8-RIBITYLLUMAZINE SYNTHASE DMRL SYNTHASE LUMAZINE SYNTHASE"/>
    <property type="match status" value="1"/>
</dbReference>
<dbReference type="Pfam" id="PF00885">
    <property type="entry name" value="DMRL_synthase"/>
    <property type="match status" value="1"/>
</dbReference>
<dbReference type="SUPFAM" id="SSF52121">
    <property type="entry name" value="Lumazine synthase"/>
    <property type="match status" value="1"/>
</dbReference>
<name>RISB_STAAC</name>
<sequence>MNFEGKLIGKDLKVAIVVSRFNDFITGRLLEGAKDTLIRHDVNEDNIDVAFVPGAFEIPLVAKKLASSGNYDAVITLGCVIRGATSHYDYVCNEVAKGVSKVNDQTNVPVIFGILTTESIEQAVERAGTKAGNKGAEAAVSAIEMANLLKSIKA</sequence>
<gene>
    <name evidence="1" type="primary">ribH</name>
    <name type="ordered locus">SACOL1817</name>
</gene>
<keyword id="KW-0686">Riboflavin biosynthesis</keyword>
<keyword id="KW-0808">Transferase</keyword>
<organism>
    <name type="scientific">Staphylococcus aureus (strain COL)</name>
    <dbReference type="NCBI Taxonomy" id="93062"/>
    <lineage>
        <taxon>Bacteria</taxon>
        <taxon>Bacillati</taxon>
        <taxon>Bacillota</taxon>
        <taxon>Bacilli</taxon>
        <taxon>Bacillales</taxon>
        <taxon>Staphylococcaceae</taxon>
        <taxon>Staphylococcus</taxon>
    </lineage>
</organism>
<comment type="function">
    <text evidence="1">Catalyzes the formation of 6,7-dimethyl-8-ribityllumazine by condensation of 5-amino-6-(D-ribitylamino)uracil with 3,4-dihydroxy-2-butanone 4-phosphate. This is the penultimate step in the biosynthesis of riboflavin.</text>
</comment>
<comment type="catalytic activity">
    <reaction evidence="1">
        <text>(2S)-2-hydroxy-3-oxobutyl phosphate + 5-amino-6-(D-ribitylamino)uracil = 6,7-dimethyl-8-(1-D-ribityl)lumazine + phosphate + 2 H2O + H(+)</text>
        <dbReference type="Rhea" id="RHEA:26152"/>
        <dbReference type="ChEBI" id="CHEBI:15377"/>
        <dbReference type="ChEBI" id="CHEBI:15378"/>
        <dbReference type="ChEBI" id="CHEBI:15934"/>
        <dbReference type="ChEBI" id="CHEBI:43474"/>
        <dbReference type="ChEBI" id="CHEBI:58201"/>
        <dbReference type="ChEBI" id="CHEBI:58830"/>
        <dbReference type="EC" id="2.5.1.78"/>
    </reaction>
</comment>
<comment type="pathway">
    <text evidence="1">Cofactor biosynthesis; riboflavin biosynthesis; riboflavin from 2-hydroxy-3-oxobutyl phosphate and 5-amino-6-(D-ribitylamino)uracil: step 1/2.</text>
</comment>
<comment type="subunit">
    <text evidence="1">Forms an icosahedral capsid composed of 60 subunits, arranged as a dodecamer of pentamers.</text>
</comment>
<comment type="similarity">
    <text evidence="1">Belongs to the DMRL synthase family.</text>
</comment>
<evidence type="ECO:0000255" key="1">
    <source>
        <dbReference type="HAMAP-Rule" id="MF_00178"/>
    </source>
</evidence>
<feature type="chain" id="PRO_0000134804" description="6,7-dimethyl-8-ribityllumazine synthase">
    <location>
        <begin position="1"/>
        <end position="154"/>
    </location>
</feature>
<feature type="active site" description="Proton donor" evidence="1">
    <location>
        <position position="87"/>
    </location>
</feature>
<feature type="binding site" evidence="1">
    <location>
        <position position="21"/>
    </location>
    <ligand>
        <name>5-amino-6-(D-ribitylamino)uracil</name>
        <dbReference type="ChEBI" id="CHEBI:15934"/>
    </ligand>
</feature>
<feature type="binding site" evidence="1">
    <location>
        <begin position="55"/>
        <end position="57"/>
    </location>
    <ligand>
        <name>5-amino-6-(D-ribitylamino)uracil</name>
        <dbReference type="ChEBI" id="CHEBI:15934"/>
    </ligand>
</feature>
<feature type="binding site" evidence="1">
    <location>
        <begin position="79"/>
        <end position="81"/>
    </location>
    <ligand>
        <name>5-amino-6-(D-ribitylamino)uracil</name>
        <dbReference type="ChEBI" id="CHEBI:15934"/>
    </ligand>
</feature>
<feature type="binding site" evidence="1">
    <location>
        <begin position="84"/>
        <end position="85"/>
    </location>
    <ligand>
        <name>(2S)-2-hydroxy-3-oxobutyl phosphate</name>
        <dbReference type="ChEBI" id="CHEBI:58830"/>
    </ligand>
</feature>
<feature type="binding site" evidence="1">
    <location>
        <position position="112"/>
    </location>
    <ligand>
        <name>5-amino-6-(D-ribitylamino)uracil</name>
        <dbReference type="ChEBI" id="CHEBI:15934"/>
    </ligand>
</feature>
<feature type="binding site" evidence="1">
    <location>
        <position position="126"/>
    </location>
    <ligand>
        <name>(2S)-2-hydroxy-3-oxobutyl phosphate</name>
        <dbReference type="ChEBI" id="CHEBI:58830"/>
    </ligand>
</feature>
<protein>
    <recommendedName>
        <fullName evidence="1">6,7-dimethyl-8-ribityllumazine synthase</fullName>
        <shortName evidence="1">DMRL synthase</shortName>
        <shortName evidence="1">LS</shortName>
        <shortName evidence="1">Lumazine synthase</shortName>
        <ecNumber evidence="1">2.5.1.78</ecNumber>
    </recommendedName>
</protein>
<proteinExistence type="inferred from homology"/>
<accession>Q5HF08</accession>